<proteinExistence type="inferred from homology"/>
<name>GCSH_THEAC</name>
<comment type="function">
    <text evidence="1">The glycine cleavage system catalyzes the degradation of glycine. The H protein shuttles the methylamine group of glycine from the P protein to the T protein.</text>
</comment>
<comment type="cofactor">
    <cofactor evidence="1">
        <name>(R)-lipoate</name>
        <dbReference type="ChEBI" id="CHEBI:83088"/>
    </cofactor>
    <text evidence="1">Binds 1 lipoyl cofactor covalently.</text>
</comment>
<comment type="subunit">
    <text evidence="1">The glycine cleavage system is composed of four proteins: P, T, L and H.</text>
</comment>
<comment type="similarity">
    <text evidence="1">Belongs to the GcvH family.</text>
</comment>
<gene>
    <name evidence="1" type="primary">gcvH</name>
    <name type="ordered locus">Ta1366</name>
</gene>
<dbReference type="EMBL" id="AL445067">
    <property type="protein sequence ID" value="CAC12487.1"/>
    <property type="molecule type" value="Genomic_DNA"/>
</dbReference>
<dbReference type="SMR" id="Q9HIH3"/>
<dbReference type="FunCoup" id="Q9HIH3">
    <property type="interactions" value="137"/>
</dbReference>
<dbReference type="STRING" id="273075.gene:9572593"/>
<dbReference type="PaxDb" id="273075-Ta1366m"/>
<dbReference type="EnsemblBacteria" id="CAC12487">
    <property type="protein sequence ID" value="CAC12487"/>
    <property type="gene ID" value="CAC12487"/>
</dbReference>
<dbReference type="KEGG" id="tac:Ta1366"/>
<dbReference type="eggNOG" id="arCOG01303">
    <property type="taxonomic scope" value="Archaea"/>
</dbReference>
<dbReference type="HOGENOM" id="CLU_097408_2_2_2"/>
<dbReference type="InParanoid" id="Q9HIH3"/>
<dbReference type="Proteomes" id="UP000001024">
    <property type="component" value="Chromosome"/>
</dbReference>
<dbReference type="GO" id="GO:0005829">
    <property type="term" value="C:cytosol"/>
    <property type="evidence" value="ECO:0007669"/>
    <property type="project" value="TreeGrafter"/>
</dbReference>
<dbReference type="GO" id="GO:0005960">
    <property type="term" value="C:glycine cleavage complex"/>
    <property type="evidence" value="ECO:0007669"/>
    <property type="project" value="InterPro"/>
</dbReference>
<dbReference type="GO" id="GO:0019464">
    <property type="term" value="P:glycine decarboxylation via glycine cleavage system"/>
    <property type="evidence" value="ECO:0007669"/>
    <property type="project" value="UniProtKB-UniRule"/>
</dbReference>
<dbReference type="CDD" id="cd06848">
    <property type="entry name" value="GCS_H"/>
    <property type="match status" value="1"/>
</dbReference>
<dbReference type="Gene3D" id="2.40.50.100">
    <property type="match status" value="1"/>
</dbReference>
<dbReference type="HAMAP" id="MF_00272">
    <property type="entry name" value="GcvH"/>
    <property type="match status" value="1"/>
</dbReference>
<dbReference type="InterPro" id="IPR000089">
    <property type="entry name" value="Biotin_lipoyl"/>
</dbReference>
<dbReference type="InterPro" id="IPR002930">
    <property type="entry name" value="GCV_H"/>
</dbReference>
<dbReference type="InterPro" id="IPR033753">
    <property type="entry name" value="GCV_H/Fam206"/>
</dbReference>
<dbReference type="InterPro" id="IPR017453">
    <property type="entry name" value="GCV_H_sub"/>
</dbReference>
<dbReference type="InterPro" id="IPR011053">
    <property type="entry name" value="Single_hybrid_motif"/>
</dbReference>
<dbReference type="NCBIfam" id="TIGR00527">
    <property type="entry name" value="gcvH"/>
    <property type="match status" value="1"/>
</dbReference>
<dbReference type="NCBIfam" id="NF002270">
    <property type="entry name" value="PRK01202.1"/>
    <property type="match status" value="1"/>
</dbReference>
<dbReference type="PANTHER" id="PTHR11715">
    <property type="entry name" value="GLYCINE CLEAVAGE SYSTEM H PROTEIN"/>
    <property type="match status" value="1"/>
</dbReference>
<dbReference type="PANTHER" id="PTHR11715:SF3">
    <property type="entry name" value="GLYCINE CLEAVAGE SYSTEM H PROTEIN-RELATED"/>
    <property type="match status" value="1"/>
</dbReference>
<dbReference type="Pfam" id="PF01597">
    <property type="entry name" value="GCV_H"/>
    <property type="match status" value="1"/>
</dbReference>
<dbReference type="SUPFAM" id="SSF51230">
    <property type="entry name" value="Single hybrid motif"/>
    <property type="match status" value="1"/>
</dbReference>
<dbReference type="PROSITE" id="PS50968">
    <property type="entry name" value="BIOTINYL_LIPOYL"/>
    <property type="match status" value="1"/>
</dbReference>
<protein>
    <recommendedName>
        <fullName evidence="1">Probable glycine cleavage system H protein</fullName>
    </recommendedName>
</protein>
<reference key="1">
    <citation type="journal article" date="2000" name="Nature">
        <title>The genome sequence of the thermoacidophilic scavenger Thermoplasma acidophilum.</title>
        <authorList>
            <person name="Ruepp A."/>
            <person name="Graml W."/>
            <person name="Santos-Martinez M.-L."/>
            <person name="Koretke K.K."/>
            <person name="Volker C."/>
            <person name="Mewes H.-W."/>
            <person name="Frishman D."/>
            <person name="Stocker S."/>
            <person name="Lupas A.N."/>
            <person name="Baumeister W."/>
        </authorList>
    </citation>
    <scope>NUCLEOTIDE SEQUENCE [LARGE SCALE GENOMIC DNA]</scope>
    <source>
        <strain>ATCC 25905 / DSM 1728 / JCM 9062 / NBRC 15155 / AMRC-C165</strain>
    </source>
</reference>
<sequence length="124" mass="13810">MIMTEVPEGLNYTKTHEWYRKDGNTATIGITDYAQSQMTDIVYVDLPKVGDKKKAGDVLLTIESVKSAEDVYSPITGTVTAVNEEVAKHPESINKDPYGSWLVKMAIESEGEHLSASEYRKLIQ</sequence>
<feature type="chain" id="PRO_0000166288" description="Probable glycine cleavage system H protein">
    <location>
        <begin position="1"/>
        <end position="124"/>
    </location>
</feature>
<feature type="domain" description="Lipoyl-binding" evidence="2">
    <location>
        <begin position="25"/>
        <end position="106"/>
    </location>
</feature>
<feature type="modified residue" description="N6-lipoyllysine" evidence="1">
    <location>
        <position position="66"/>
    </location>
</feature>
<accession>Q9HIH3</accession>
<evidence type="ECO:0000255" key="1">
    <source>
        <dbReference type="HAMAP-Rule" id="MF_00272"/>
    </source>
</evidence>
<evidence type="ECO:0000255" key="2">
    <source>
        <dbReference type="PROSITE-ProRule" id="PRU01066"/>
    </source>
</evidence>
<keyword id="KW-0450">Lipoyl</keyword>
<keyword id="KW-1185">Reference proteome</keyword>
<organism>
    <name type="scientific">Thermoplasma acidophilum (strain ATCC 25905 / DSM 1728 / JCM 9062 / NBRC 15155 / AMRC-C165)</name>
    <dbReference type="NCBI Taxonomy" id="273075"/>
    <lineage>
        <taxon>Archaea</taxon>
        <taxon>Methanobacteriati</taxon>
        <taxon>Thermoplasmatota</taxon>
        <taxon>Thermoplasmata</taxon>
        <taxon>Thermoplasmatales</taxon>
        <taxon>Thermoplasmataceae</taxon>
        <taxon>Thermoplasma</taxon>
    </lineage>
</organism>